<keyword id="KW-0001">2Fe-2S</keyword>
<keyword id="KW-0963">Cytoplasm</keyword>
<keyword id="KW-0408">Iron</keyword>
<keyword id="KW-0411">Iron-sulfur</keyword>
<keyword id="KW-0479">Metal-binding</keyword>
<keyword id="KW-0663">Pyridoxal phosphate</keyword>
<keyword id="KW-1185">Reference proteome</keyword>
<keyword id="KW-0808">Transferase</keyword>
<dbReference type="EC" id="2.8.1.7" evidence="1"/>
<dbReference type="EMBL" id="CR378665">
    <property type="protein sequence ID" value="CAG19163.1"/>
    <property type="molecule type" value="Genomic_DNA"/>
</dbReference>
<dbReference type="RefSeq" id="WP_011217506.1">
    <property type="nucleotide sequence ID" value="NC_006370.1"/>
</dbReference>
<dbReference type="SMR" id="Q6LU62"/>
<dbReference type="STRING" id="298386.PBPRA0750"/>
<dbReference type="KEGG" id="ppr:PBPRA0750"/>
<dbReference type="eggNOG" id="COG1104">
    <property type="taxonomic scope" value="Bacteria"/>
</dbReference>
<dbReference type="HOGENOM" id="CLU_003433_0_2_6"/>
<dbReference type="UniPathway" id="UPA00266"/>
<dbReference type="Proteomes" id="UP000000593">
    <property type="component" value="Chromosome 1"/>
</dbReference>
<dbReference type="GO" id="GO:1990221">
    <property type="term" value="C:L-cysteine desulfurase complex"/>
    <property type="evidence" value="ECO:0007669"/>
    <property type="project" value="UniProtKB-ARBA"/>
</dbReference>
<dbReference type="GO" id="GO:0051537">
    <property type="term" value="F:2 iron, 2 sulfur cluster binding"/>
    <property type="evidence" value="ECO:0007669"/>
    <property type="project" value="UniProtKB-UniRule"/>
</dbReference>
<dbReference type="GO" id="GO:0031071">
    <property type="term" value="F:cysteine desulfurase activity"/>
    <property type="evidence" value="ECO:0007669"/>
    <property type="project" value="UniProtKB-UniRule"/>
</dbReference>
<dbReference type="GO" id="GO:0046872">
    <property type="term" value="F:metal ion binding"/>
    <property type="evidence" value="ECO:0007669"/>
    <property type="project" value="UniProtKB-KW"/>
</dbReference>
<dbReference type="GO" id="GO:0030170">
    <property type="term" value="F:pyridoxal phosphate binding"/>
    <property type="evidence" value="ECO:0007669"/>
    <property type="project" value="UniProtKB-UniRule"/>
</dbReference>
<dbReference type="GO" id="GO:0044571">
    <property type="term" value="P:[2Fe-2S] cluster assembly"/>
    <property type="evidence" value="ECO:0007669"/>
    <property type="project" value="UniProtKB-UniRule"/>
</dbReference>
<dbReference type="FunFam" id="3.40.640.10:FF:000003">
    <property type="entry name" value="Cysteine desulfurase IscS"/>
    <property type="match status" value="1"/>
</dbReference>
<dbReference type="FunFam" id="3.90.1150.10:FF:000002">
    <property type="entry name" value="Cysteine desulfurase IscS"/>
    <property type="match status" value="1"/>
</dbReference>
<dbReference type="Gene3D" id="3.90.1150.10">
    <property type="entry name" value="Aspartate Aminotransferase, domain 1"/>
    <property type="match status" value="1"/>
</dbReference>
<dbReference type="Gene3D" id="3.40.640.10">
    <property type="entry name" value="Type I PLP-dependent aspartate aminotransferase-like (Major domain)"/>
    <property type="match status" value="1"/>
</dbReference>
<dbReference type="HAMAP" id="MF_00331">
    <property type="entry name" value="Cys_desulf_IscS"/>
    <property type="match status" value="1"/>
</dbReference>
<dbReference type="InterPro" id="IPR000192">
    <property type="entry name" value="Aminotrans_V_dom"/>
</dbReference>
<dbReference type="InterPro" id="IPR020578">
    <property type="entry name" value="Aminotrans_V_PyrdxlP_BS"/>
</dbReference>
<dbReference type="InterPro" id="IPR010240">
    <property type="entry name" value="Cys_deSase_IscS"/>
</dbReference>
<dbReference type="InterPro" id="IPR016454">
    <property type="entry name" value="Cysteine_dSase"/>
</dbReference>
<dbReference type="InterPro" id="IPR015424">
    <property type="entry name" value="PyrdxlP-dep_Trfase"/>
</dbReference>
<dbReference type="InterPro" id="IPR015421">
    <property type="entry name" value="PyrdxlP-dep_Trfase_major"/>
</dbReference>
<dbReference type="InterPro" id="IPR015422">
    <property type="entry name" value="PyrdxlP-dep_Trfase_small"/>
</dbReference>
<dbReference type="NCBIfam" id="TIGR02006">
    <property type="entry name" value="IscS"/>
    <property type="match status" value="1"/>
</dbReference>
<dbReference type="NCBIfam" id="NF010611">
    <property type="entry name" value="PRK14012.1"/>
    <property type="match status" value="1"/>
</dbReference>
<dbReference type="PANTHER" id="PTHR11601:SF34">
    <property type="entry name" value="CYSTEINE DESULFURASE"/>
    <property type="match status" value="1"/>
</dbReference>
<dbReference type="PANTHER" id="PTHR11601">
    <property type="entry name" value="CYSTEINE DESULFURYLASE FAMILY MEMBER"/>
    <property type="match status" value="1"/>
</dbReference>
<dbReference type="Pfam" id="PF00266">
    <property type="entry name" value="Aminotran_5"/>
    <property type="match status" value="1"/>
</dbReference>
<dbReference type="PIRSF" id="PIRSF005572">
    <property type="entry name" value="NifS"/>
    <property type="match status" value="1"/>
</dbReference>
<dbReference type="SUPFAM" id="SSF53383">
    <property type="entry name" value="PLP-dependent transferases"/>
    <property type="match status" value="1"/>
</dbReference>
<dbReference type="PROSITE" id="PS00595">
    <property type="entry name" value="AA_TRANSFER_CLASS_5"/>
    <property type="match status" value="1"/>
</dbReference>
<reference key="1">
    <citation type="journal article" date="2005" name="Science">
        <title>Life at depth: Photobacterium profundum genome sequence and expression analysis.</title>
        <authorList>
            <person name="Vezzi A."/>
            <person name="Campanaro S."/>
            <person name="D'Angelo M."/>
            <person name="Simonato F."/>
            <person name="Vitulo N."/>
            <person name="Lauro F.M."/>
            <person name="Cestaro A."/>
            <person name="Malacrida G."/>
            <person name="Simionati B."/>
            <person name="Cannata N."/>
            <person name="Romualdi C."/>
            <person name="Bartlett D.H."/>
            <person name="Valle G."/>
        </authorList>
    </citation>
    <scope>NUCLEOTIDE SEQUENCE [LARGE SCALE GENOMIC DNA]</scope>
    <source>
        <strain>ATCC BAA-1253 / SS9</strain>
    </source>
</reference>
<sequence>MKLPIYFDYSATCPVDPRVAEKMMQCLTMDGNFGNPASRSHRFGWQAEEAVDTAREQVADLMNADPREIVFTSGATESDNLAIKGAARFYSKKGKHIITCKTEHKAVLDPCRQLEREGFEVTYLDPEANGLIDMAKLRDAIREDTVLMSIMHVNNEIGVIQDITAIGELCRENKIVFHVDAAQSIGKLPIDVQAMKVDLISVTSHKIYGPKGIGALYVRRKPRIRLEAQMHGGGHERGMRSGTLATHQIVGMGEAFRIAKEEMEQDRVHTLALRTRLLDGLKDMESVHINGDLEQRVSSNLNISFAFVEGESLLMALKDLAVSSGSACTSASLEPSYVLRALGLDDELAHSSIRFSFGRFSTEEEIDYAITQIRTAVEKLRDMSPLWDMHKEGIDLNSVEWAHH</sequence>
<accession>Q6LU62</accession>
<feature type="chain" id="PRO_1000019420" description="Cysteine desulfurase IscS">
    <location>
        <begin position="1"/>
        <end position="404"/>
    </location>
</feature>
<feature type="active site" description="Cysteine persulfide intermediate" evidence="1">
    <location>
        <position position="328"/>
    </location>
</feature>
<feature type="binding site" evidence="1">
    <location>
        <begin position="75"/>
        <end position="76"/>
    </location>
    <ligand>
        <name>pyridoxal 5'-phosphate</name>
        <dbReference type="ChEBI" id="CHEBI:597326"/>
    </ligand>
</feature>
<feature type="binding site" evidence="1">
    <location>
        <position position="155"/>
    </location>
    <ligand>
        <name>pyridoxal 5'-phosphate</name>
        <dbReference type="ChEBI" id="CHEBI:597326"/>
    </ligand>
</feature>
<feature type="binding site" evidence="1">
    <location>
        <position position="183"/>
    </location>
    <ligand>
        <name>pyridoxal 5'-phosphate</name>
        <dbReference type="ChEBI" id="CHEBI:597326"/>
    </ligand>
</feature>
<feature type="binding site" evidence="1">
    <location>
        <begin position="203"/>
        <end position="205"/>
    </location>
    <ligand>
        <name>pyridoxal 5'-phosphate</name>
        <dbReference type="ChEBI" id="CHEBI:597326"/>
    </ligand>
</feature>
<feature type="binding site" evidence="1">
    <location>
        <position position="243"/>
    </location>
    <ligand>
        <name>pyridoxal 5'-phosphate</name>
        <dbReference type="ChEBI" id="CHEBI:597326"/>
    </ligand>
</feature>
<feature type="binding site" description="via persulfide group" evidence="1">
    <location>
        <position position="328"/>
    </location>
    <ligand>
        <name>[2Fe-2S] cluster</name>
        <dbReference type="ChEBI" id="CHEBI:190135"/>
        <note>ligand shared with IscU</note>
    </ligand>
</feature>
<feature type="modified residue" description="N6-(pyridoxal phosphate)lysine" evidence="1">
    <location>
        <position position="206"/>
    </location>
</feature>
<proteinExistence type="inferred from homology"/>
<name>ISCS_PHOPR</name>
<protein>
    <recommendedName>
        <fullName evidence="1">Cysteine desulfurase IscS</fullName>
        <ecNumber evidence="1">2.8.1.7</ecNumber>
    </recommendedName>
</protein>
<evidence type="ECO:0000255" key="1">
    <source>
        <dbReference type="HAMAP-Rule" id="MF_00331"/>
    </source>
</evidence>
<organism>
    <name type="scientific">Photobacterium profundum (strain SS9)</name>
    <dbReference type="NCBI Taxonomy" id="298386"/>
    <lineage>
        <taxon>Bacteria</taxon>
        <taxon>Pseudomonadati</taxon>
        <taxon>Pseudomonadota</taxon>
        <taxon>Gammaproteobacteria</taxon>
        <taxon>Vibrionales</taxon>
        <taxon>Vibrionaceae</taxon>
        <taxon>Photobacterium</taxon>
    </lineage>
</organism>
<comment type="function">
    <text evidence="1">Master enzyme that delivers sulfur to a number of partners involved in Fe-S cluster assembly, tRNA modification or cofactor biosynthesis. Catalyzes the removal of elemental sulfur atoms from cysteine to produce alanine. Functions as a sulfur delivery protein for Fe-S cluster synthesis onto IscU, an Fe-S scaffold assembly protein, as well as other S acceptor proteins.</text>
</comment>
<comment type="catalytic activity">
    <reaction evidence="1">
        <text>(sulfur carrier)-H + L-cysteine = (sulfur carrier)-SH + L-alanine</text>
        <dbReference type="Rhea" id="RHEA:43892"/>
        <dbReference type="Rhea" id="RHEA-COMP:14737"/>
        <dbReference type="Rhea" id="RHEA-COMP:14739"/>
        <dbReference type="ChEBI" id="CHEBI:29917"/>
        <dbReference type="ChEBI" id="CHEBI:35235"/>
        <dbReference type="ChEBI" id="CHEBI:57972"/>
        <dbReference type="ChEBI" id="CHEBI:64428"/>
        <dbReference type="EC" id="2.8.1.7"/>
    </reaction>
</comment>
<comment type="cofactor">
    <cofactor evidence="1">
        <name>pyridoxal 5'-phosphate</name>
        <dbReference type="ChEBI" id="CHEBI:597326"/>
    </cofactor>
</comment>
<comment type="pathway">
    <text evidence="1">Cofactor biosynthesis; iron-sulfur cluster biosynthesis.</text>
</comment>
<comment type="subunit">
    <text evidence="1">Homodimer. Forms a heterotetramer with IscU, interacts with other sulfur acceptors.</text>
</comment>
<comment type="subcellular location">
    <subcellularLocation>
        <location evidence="1">Cytoplasm</location>
    </subcellularLocation>
</comment>
<comment type="similarity">
    <text evidence="1">Belongs to the class-V pyridoxal-phosphate-dependent aminotransferase family. NifS/IscS subfamily.</text>
</comment>
<gene>
    <name evidence="1" type="primary">iscS</name>
    <name type="ordered locus">PBPRA0750</name>
</gene>